<name>AROB_DICTD</name>
<proteinExistence type="inferred from homology"/>
<feature type="chain" id="PRO_1000117483" description="3-dehydroquinate synthase">
    <location>
        <begin position="1"/>
        <end position="355"/>
    </location>
</feature>
<feature type="binding site" evidence="1">
    <location>
        <begin position="98"/>
        <end position="102"/>
    </location>
    <ligand>
        <name>NAD(+)</name>
        <dbReference type="ChEBI" id="CHEBI:57540"/>
    </ligand>
</feature>
<feature type="binding site" evidence="1">
    <location>
        <begin position="122"/>
        <end position="123"/>
    </location>
    <ligand>
        <name>NAD(+)</name>
        <dbReference type="ChEBI" id="CHEBI:57540"/>
    </ligand>
</feature>
<feature type="binding site" evidence="1">
    <location>
        <position position="135"/>
    </location>
    <ligand>
        <name>NAD(+)</name>
        <dbReference type="ChEBI" id="CHEBI:57540"/>
    </ligand>
</feature>
<feature type="binding site" evidence="1">
    <location>
        <position position="144"/>
    </location>
    <ligand>
        <name>NAD(+)</name>
        <dbReference type="ChEBI" id="CHEBI:57540"/>
    </ligand>
</feature>
<feature type="binding site" evidence="1">
    <location>
        <begin position="162"/>
        <end position="165"/>
    </location>
    <ligand>
        <name>NAD(+)</name>
        <dbReference type="ChEBI" id="CHEBI:57540"/>
    </ligand>
</feature>
<feature type="binding site" evidence="1">
    <location>
        <position position="177"/>
    </location>
    <ligand>
        <name>Zn(2+)</name>
        <dbReference type="ChEBI" id="CHEBI:29105"/>
    </ligand>
</feature>
<feature type="binding site" evidence="1">
    <location>
        <position position="240"/>
    </location>
    <ligand>
        <name>Zn(2+)</name>
        <dbReference type="ChEBI" id="CHEBI:29105"/>
    </ligand>
</feature>
<feature type="binding site" evidence="1">
    <location>
        <position position="257"/>
    </location>
    <ligand>
        <name>Zn(2+)</name>
        <dbReference type="ChEBI" id="CHEBI:29105"/>
    </ligand>
</feature>
<dbReference type="EC" id="4.2.3.4" evidence="1"/>
<dbReference type="EMBL" id="CP001251">
    <property type="protein sequence ID" value="ACK42336.1"/>
    <property type="molecule type" value="Genomic_DNA"/>
</dbReference>
<dbReference type="RefSeq" id="WP_012583419.1">
    <property type="nucleotide sequence ID" value="NC_011661.1"/>
</dbReference>
<dbReference type="RefSeq" id="YP_002352950.1">
    <property type="nucleotide sequence ID" value="NC_011661.1"/>
</dbReference>
<dbReference type="SMR" id="B8E259"/>
<dbReference type="FunCoup" id="B8E259">
    <property type="interactions" value="371"/>
</dbReference>
<dbReference type="STRING" id="515635.Dtur_1056"/>
<dbReference type="EnsemblBacteria" id="ACK42336">
    <property type="protein sequence ID" value="ACK42336"/>
    <property type="gene ID" value="Dtur_1056"/>
</dbReference>
<dbReference type="KEGG" id="dtu:Dtur_1056"/>
<dbReference type="PATRIC" id="fig|515635.4.peg.1093"/>
<dbReference type="eggNOG" id="COG0337">
    <property type="taxonomic scope" value="Bacteria"/>
</dbReference>
<dbReference type="HOGENOM" id="CLU_001201_0_2_0"/>
<dbReference type="InParanoid" id="B8E259"/>
<dbReference type="OrthoDB" id="9806583at2"/>
<dbReference type="UniPathway" id="UPA00053">
    <property type="reaction ID" value="UER00085"/>
</dbReference>
<dbReference type="Proteomes" id="UP000007719">
    <property type="component" value="Chromosome"/>
</dbReference>
<dbReference type="GO" id="GO:0005737">
    <property type="term" value="C:cytoplasm"/>
    <property type="evidence" value="ECO:0007669"/>
    <property type="project" value="UniProtKB-SubCell"/>
</dbReference>
<dbReference type="GO" id="GO:0003856">
    <property type="term" value="F:3-dehydroquinate synthase activity"/>
    <property type="evidence" value="ECO:0000318"/>
    <property type="project" value="GO_Central"/>
</dbReference>
<dbReference type="GO" id="GO:0046872">
    <property type="term" value="F:metal ion binding"/>
    <property type="evidence" value="ECO:0007669"/>
    <property type="project" value="UniProtKB-KW"/>
</dbReference>
<dbReference type="GO" id="GO:0000166">
    <property type="term" value="F:nucleotide binding"/>
    <property type="evidence" value="ECO:0007669"/>
    <property type="project" value="UniProtKB-KW"/>
</dbReference>
<dbReference type="GO" id="GO:0008652">
    <property type="term" value="P:amino acid biosynthetic process"/>
    <property type="evidence" value="ECO:0007669"/>
    <property type="project" value="UniProtKB-KW"/>
</dbReference>
<dbReference type="GO" id="GO:0009073">
    <property type="term" value="P:aromatic amino acid family biosynthetic process"/>
    <property type="evidence" value="ECO:0000318"/>
    <property type="project" value="GO_Central"/>
</dbReference>
<dbReference type="GO" id="GO:0009423">
    <property type="term" value="P:chorismate biosynthetic process"/>
    <property type="evidence" value="ECO:0007669"/>
    <property type="project" value="UniProtKB-UniRule"/>
</dbReference>
<dbReference type="CDD" id="cd08195">
    <property type="entry name" value="DHQS"/>
    <property type="match status" value="1"/>
</dbReference>
<dbReference type="FunFam" id="3.40.50.1970:FF:000007">
    <property type="entry name" value="Pentafunctional AROM polypeptide"/>
    <property type="match status" value="1"/>
</dbReference>
<dbReference type="Gene3D" id="3.40.50.1970">
    <property type="match status" value="1"/>
</dbReference>
<dbReference type="Gene3D" id="1.20.1090.10">
    <property type="entry name" value="Dehydroquinate synthase-like - alpha domain"/>
    <property type="match status" value="1"/>
</dbReference>
<dbReference type="HAMAP" id="MF_00110">
    <property type="entry name" value="DHQ_synthase"/>
    <property type="match status" value="1"/>
</dbReference>
<dbReference type="InterPro" id="IPR050071">
    <property type="entry name" value="Dehydroquinate_synthase"/>
</dbReference>
<dbReference type="InterPro" id="IPR016037">
    <property type="entry name" value="DHQ_synth_AroB"/>
</dbReference>
<dbReference type="InterPro" id="IPR030963">
    <property type="entry name" value="DHQ_synth_fam"/>
</dbReference>
<dbReference type="InterPro" id="IPR030960">
    <property type="entry name" value="DHQS/DOIS_N"/>
</dbReference>
<dbReference type="InterPro" id="IPR056179">
    <property type="entry name" value="DHQS_C"/>
</dbReference>
<dbReference type="NCBIfam" id="TIGR01357">
    <property type="entry name" value="aroB"/>
    <property type="match status" value="1"/>
</dbReference>
<dbReference type="PANTHER" id="PTHR43622">
    <property type="entry name" value="3-DEHYDROQUINATE SYNTHASE"/>
    <property type="match status" value="1"/>
</dbReference>
<dbReference type="PANTHER" id="PTHR43622:SF7">
    <property type="entry name" value="3-DEHYDROQUINATE SYNTHASE, CHLOROPLASTIC"/>
    <property type="match status" value="1"/>
</dbReference>
<dbReference type="Pfam" id="PF01761">
    <property type="entry name" value="DHQ_synthase"/>
    <property type="match status" value="1"/>
</dbReference>
<dbReference type="Pfam" id="PF24621">
    <property type="entry name" value="DHQS_C"/>
    <property type="match status" value="1"/>
</dbReference>
<dbReference type="PIRSF" id="PIRSF001455">
    <property type="entry name" value="DHQ_synth"/>
    <property type="match status" value="1"/>
</dbReference>
<dbReference type="SUPFAM" id="SSF56796">
    <property type="entry name" value="Dehydroquinate synthase-like"/>
    <property type="match status" value="1"/>
</dbReference>
<evidence type="ECO:0000255" key="1">
    <source>
        <dbReference type="HAMAP-Rule" id="MF_00110"/>
    </source>
</evidence>
<protein>
    <recommendedName>
        <fullName evidence="1">3-dehydroquinate synthase</fullName>
        <shortName evidence="1">DHQS</shortName>
        <ecNumber evidence="1">4.2.3.4</ecNumber>
    </recommendedName>
</protein>
<organism>
    <name type="scientific">Dictyoglomus turgidum (strain DSM 6724 / Z-1310)</name>
    <dbReference type="NCBI Taxonomy" id="515635"/>
    <lineage>
        <taxon>Bacteria</taxon>
        <taxon>Pseudomonadati</taxon>
        <taxon>Dictyoglomota</taxon>
        <taxon>Dictyoglomia</taxon>
        <taxon>Dictyoglomales</taxon>
        <taxon>Dictyoglomaceae</taxon>
        <taxon>Dictyoglomus</taxon>
    </lineage>
</organism>
<keyword id="KW-0028">Amino-acid biosynthesis</keyword>
<keyword id="KW-0057">Aromatic amino acid biosynthesis</keyword>
<keyword id="KW-0170">Cobalt</keyword>
<keyword id="KW-0963">Cytoplasm</keyword>
<keyword id="KW-0456">Lyase</keyword>
<keyword id="KW-0479">Metal-binding</keyword>
<keyword id="KW-0520">NAD</keyword>
<keyword id="KW-0547">Nucleotide-binding</keyword>
<keyword id="KW-1185">Reference proteome</keyword>
<keyword id="KW-0862">Zinc</keyword>
<reference key="1">
    <citation type="journal article" date="2016" name="Front. Microbiol.">
        <title>The complete genome sequence of hyperthermophile Dictyoglomus turgidum DSM 6724 reveals a specialized carbohydrate fermentor.</title>
        <authorList>
            <person name="Brumm P.J."/>
            <person name="Gowda K."/>
            <person name="Robb F.T."/>
            <person name="Mead D.A."/>
        </authorList>
    </citation>
    <scope>NUCLEOTIDE SEQUENCE [LARGE SCALE GENOMIC DNA]</scope>
    <source>
        <strain>DSM 6724 / Z-1310</strain>
    </source>
</reference>
<gene>
    <name evidence="1" type="primary">aroB</name>
    <name type="ordered locus">Dtur_1056</name>
</gene>
<comment type="function">
    <text evidence="1">Catalyzes the conversion of 3-deoxy-D-arabino-heptulosonate 7-phosphate (DAHP) to dehydroquinate (DHQ).</text>
</comment>
<comment type="catalytic activity">
    <reaction evidence="1">
        <text>7-phospho-2-dehydro-3-deoxy-D-arabino-heptonate = 3-dehydroquinate + phosphate</text>
        <dbReference type="Rhea" id="RHEA:21968"/>
        <dbReference type="ChEBI" id="CHEBI:32364"/>
        <dbReference type="ChEBI" id="CHEBI:43474"/>
        <dbReference type="ChEBI" id="CHEBI:58394"/>
        <dbReference type="EC" id="4.2.3.4"/>
    </reaction>
</comment>
<comment type="cofactor">
    <cofactor evidence="1">
        <name>Co(2+)</name>
        <dbReference type="ChEBI" id="CHEBI:48828"/>
    </cofactor>
    <cofactor evidence="1">
        <name>Zn(2+)</name>
        <dbReference type="ChEBI" id="CHEBI:29105"/>
    </cofactor>
    <text evidence="1">Binds 1 divalent metal cation per subunit. Can use either Co(2+) or Zn(2+).</text>
</comment>
<comment type="cofactor">
    <cofactor evidence="1">
        <name>NAD(+)</name>
        <dbReference type="ChEBI" id="CHEBI:57540"/>
    </cofactor>
</comment>
<comment type="pathway">
    <text evidence="1">Metabolic intermediate biosynthesis; chorismate biosynthesis; chorismate from D-erythrose 4-phosphate and phosphoenolpyruvate: step 2/7.</text>
</comment>
<comment type="subcellular location">
    <subcellularLocation>
        <location evidence="1">Cytoplasm</location>
    </subcellularLocation>
</comment>
<comment type="similarity">
    <text evidence="1">Belongs to the sugar phosphate cyclases superfamily. Dehydroquinate synthase family.</text>
</comment>
<accession>B8E259</accession>
<sequence>MEELTIDLKDKKYPIYIGYNILRRLIKEYWDKYSSSFLITHPFLREIYKEDLSIPEENVIYVPVGEKSKSFQEVIKISKELAKRMADRRSALFAFGGGVVGDLTGFIASIYMRGIKYIQIPTTLLSQVDSSIGGKTGINIREGKNLIGTFYHPDAVIIDIKTLDTLSEREYKSGIAEVIKYGMIMNYEFFKFLEKNVDSILSKDVDKLLYVIKESLLCKKYVVEKDEKESSLRMILNFGHTFGHAIEAKGGYRRFLHGEAVAIGMLLATYLGYKLGFCNYEVLERLKELLMLFGFKIKSPYRIEDLMEYIKRDKKAYGGKLRLILPREIGRVEIVEDIEEKDIIKILKEGDDYGK</sequence>